<dbReference type="EC" id="6.3.2.1" evidence="1"/>
<dbReference type="EMBL" id="CP001100">
    <property type="protein sequence ID" value="ACF12505.1"/>
    <property type="molecule type" value="Genomic_DNA"/>
</dbReference>
<dbReference type="RefSeq" id="WP_012498589.1">
    <property type="nucleotide sequence ID" value="NC_011026.1"/>
</dbReference>
<dbReference type="SMR" id="B3QSB4"/>
<dbReference type="STRING" id="517418.Ctha_0033"/>
<dbReference type="KEGG" id="cts:Ctha_0033"/>
<dbReference type="eggNOG" id="COG0414">
    <property type="taxonomic scope" value="Bacteria"/>
</dbReference>
<dbReference type="HOGENOM" id="CLU_047148_0_0_10"/>
<dbReference type="OrthoDB" id="9773087at2"/>
<dbReference type="UniPathway" id="UPA00028">
    <property type="reaction ID" value="UER00005"/>
</dbReference>
<dbReference type="Proteomes" id="UP000001208">
    <property type="component" value="Chromosome"/>
</dbReference>
<dbReference type="GO" id="GO:0005829">
    <property type="term" value="C:cytosol"/>
    <property type="evidence" value="ECO:0007669"/>
    <property type="project" value="TreeGrafter"/>
</dbReference>
<dbReference type="GO" id="GO:0005524">
    <property type="term" value="F:ATP binding"/>
    <property type="evidence" value="ECO:0007669"/>
    <property type="project" value="UniProtKB-KW"/>
</dbReference>
<dbReference type="GO" id="GO:0004592">
    <property type="term" value="F:pantoate-beta-alanine ligase activity"/>
    <property type="evidence" value="ECO:0007669"/>
    <property type="project" value="UniProtKB-UniRule"/>
</dbReference>
<dbReference type="GO" id="GO:0015940">
    <property type="term" value="P:pantothenate biosynthetic process"/>
    <property type="evidence" value="ECO:0007669"/>
    <property type="project" value="UniProtKB-UniRule"/>
</dbReference>
<dbReference type="CDD" id="cd00560">
    <property type="entry name" value="PanC"/>
    <property type="match status" value="1"/>
</dbReference>
<dbReference type="FunFam" id="3.40.50.620:FF:000114">
    <property type="entry name" value="Pantothenate synthetase"/>
    <property type="match status" value="1"/>
</dbReference>
<dbReference type="Gene3D" id="3.40.50.620">
    <property type="entry name" value="HUPs"/>
    <property type="match status" value="1"/>
</dbReference>
<dbReference type="Gene3D" id="3.30.1300.10">
    <property type="entry name" value="Pantoate-beta-alanine ligase, C-terminal domain"/>
    <property type="match status" value="1"/>
</dbReference>
<dbReference type="HAMAP" id="MF_00158">
    <property type="entry name" value="PanC"/>
    <property type="match status" value="1"/>
</dbReference>
<dbReference type="InterPro" id="IPR003721">
    <property type="entry name" value="Pantoate_ligase"/>
</dbReference>
<dbReference type="InterPro" id="IPR042176">
    <property type="entry name" value="Pantoate_ligase_C"/>
</dbReference>
<dbReference type="InterPro" id="IPR014729">
    <property type="entry name" value="Rossmann-like_a/b/a_fold"/>
</dbReference>
<dbReference type="NCBIfam" id="TIGR00018">
    <property type="entry name" value="panC"/>
    <property type="match status" value="1"/>
</dbReference>
<dbReference type="PANTHER" id="PTHR21299">
    <property type="entry name" value="CYTIDYLATE KINASE/PANTOATE-BETA-ALANINE LIGASE"/>
    <property type="match status" value="1"/>
</dbReference>
<dbReference type="PANTHER" id="PTHR21299:SF1">
    <property type="entry name" value="PANTOATE--BETA-ALANINE LIGASE"/>
    <property type="match status" value="1"/>
</dbReference>
<dbReference type="Pfam" id="PF02569">
    <property type="entry name" value="Pantoate_ligase"/>
    <property type="match status" value="1"/>
</dbReference>
<dbReference type="SUPFAM" id="SSF52374">
    <property type="entry name" value="Nucleotidylyl transferase"/>
    <property type="match status" value="1"/>
</dbReference>
<proteinExistence type="inferred from homology"/>
<evidence type="ECO:0000255" key="1">
    <source>
        <dbReference type="HAMAP-Rule" id="MF_00158"/>
    </source>
</evidence>
<comment type="function">
    <text evidence="1">Catalyzes the condensation of pantoate with beta-alanine in an ATP-dependent reaction via a pantoyl-adenylate intermediate.</text>
</comment>
<comment type="catalytic activity">
    <reaction evidence="1">
        <text>(R)-pantoate + beta-alanine + ATP = (R)-pantothenate + AMP + diphosphate + H(+)</text>
        <dbReference type="Rhea" id="RHEA:10912"/>
        <dbReference type="ChEBI" id="CHEBI:15378"/>
        <dbReference type="ChEBI" id="CHEBI:15980"/>
        <dbReference type="ChEBI" id="CHEBI:29032"/>
        <dbReference type="ChEBI" id="CHEBI:30616"/>
        <dbReference type="ChEBI" id="CHEBI:33019"/>
        <dbReference type="ChEBI" id="CHEBI:57966"/>
        <dbReference type="ChEBI" id="CHEBI:456215"/>
        <dbReference type="EC" id="6.3.2.1"/>
    </reaction>
</comment>
<comment type="pathway">
    <text evidence="1">Cofactor biosynthesis; (R)-pantothenate biosynthesis; (R)-pantothenate from (R)-pantoate and beta-alanine: step 1/1.</text>
</comment>
<comment type="subunit">
    <text evidence="1">Homodimer.</text>
</comment>
<comment type="subcellular location">
    <subcellularLocation>
        <location evidence="1">Cytoplasm</location>
    </subcellularLocation>
</comment>
<comment type="miscellaneous">
    <text evidence="1">The reaction proceeds by a bi uni uni bi ping pong mechanism.</text>
</comment>
<comment type="similarity">
    <text evidence="1">Belongs to the pantothenate synthetase family.</text>
</comment>
<gene>
    <name evidence="1" type="primary">panC</name>
    <name type="ordered locus">Ctha_0033</name>
</gene>
<keyword id="KW-0067">ATP-binding</keyword>
<keyword id="KW-0963">Cytoplasm</keyword>
<keyword id="KW-0436">Ligase</keyword>
<keyword id="KW-0547">Nucleotide-binding</keyword>
<keyword id="KW-0566">Pantothenate biosynthesis</keyword>
<keyword id="KW-1185">Reference proteome</keyword>
<protein>
    <recommendedName>
        <fullName evidence="1">Pantothenate synthetase</fullName>
        <shortName evidence="1">PS</shortName>
        <ecNumber evidence="1">6.3.2.1</ecNumber>
    </recommendedName>
    <alternativeName>
        <fullName evidence="1">Pantoate--beta-alanine ligase</fullName>
    </alternativeName>
    <alternativeName>
        <fullName evidence="1">Pantoate-activating enzyme</fullName>
    </alternativeName>
</protein>
<reference key="1">
    <citation type="submission" date="2008-06" db="EMBL/GenBank/DDBJ databases">
        <title>Complete sequence of Chloroherpeton thalassium ATCC 35110.</title>
        <authorList>
            <consortium name="US DOE Joint Genome Institute"/>
            <person name="Lucas S."/>
            <person name="Copeland A."/>
            <person name="Lapidus A."/>
            <person name="Glavina del Rio T."/>
            <person name="Dalin E."/>
            <person name="Tice H."/>
            <person name="Bruce D."/>
            <person name="Goodwin L."/>
            <person name="Pitluck S."/>
            <person name="Schmutz J."/>
            <person name="Larimer F."/>
            <person name="Land M."/>
            <person name="Hauser L."/>
            <person name="Kyrpides N."/>
            <person name="Mikhailova N."/>
            <person name="Liu Z."/>
            <person name="Li T."/>
            <person name="Zhao F."/>
            <person name="Overmann J."/>
            <person name="Bryant D.A."/>
            <person name="Richardson P."/>
        </authorList>
    </citation>
    <scope>NUCLEOTIDE SEQUENCE [LARGE SCALE GENOMIC DNA]</scope>
    <source>
        <strain>ATCC 35110 / GB-78</strain>
    </source>
</reference>
<organism>
    <name type="scientific">Chloroherpeton thalassium (strain ATCC 35110 / GB-78)</name>
    <dbReference type="NCBI Taxonomy" id="517418"/>
    <lineage>
        <taxon>Bacteria</taxon>
        <taxon>Pseudomonadati</taxon>
        <taxon>Chlorobiota</taxon>
        <taxon>Chlorobiia</taxon>
        <taxon>Chlorobiales</taxon>
        <taxon>Chloroherpetonaceae</taxon>
        <taxon>Chloroherpeton</taxon>
    </lineage>
</organism>
<sequence length="284" mass="31641">MKIIETVSEMQHFSESLRIAEKRLGVVPTMGALHDGHLSLVKLALKHADVAIMTIFVNPLQFGPSEDFAKYPRTFERDAMLAEKAGVSCIFAPTPETLYPSGFQTHVTVDEITQGFEGELRPGHFRGVTTVVAKLFNITKPHVAVFGEKDAQQLAAIRKMQKDLNFDVEIVPAPIVRETDGLAKSSRNIYLNPAERKQAVVLNESLEIAKSAIQHGERNVKTLLEVLNRHIQSAPLAEPDYIAIVDAESFQPVQEELLAEETYLVLLTVRFGSTRLLDNCRIEL</sequence>
<feature type="chain" id="PRO_1000097048" description="Pantothenate synthetase">
    <location>
        <begin position="1"/>
        <end position="284"/>
    </location>
</feature>
<feature type="active site" description="Proton donor" evidence="1">
    <location>
        <position position="37"/>
    </location>
</feature>
<feature type="binding site" evidence="1">
    <location>
        <begin position="30"/>
        <end position="37"/>
    </location>
    <ligand>
        <name>ATP</name>
        <dbReference type="ChEBI" id="CHEBI:30616"/>
    </ligand>
</feature>
<feature type="binding site" evidence="1">
    <location>
        <position position="61"/>
    </location>
    <ligand>
        <name>(R)-pantoate</name>
        <dbReference type="ChEBI" id="CHEBI:15980"/>
    </ligand>
</feature>
<feature type="binding site" evidence="1">
    <location>
        <position position="61"/>
    </location>
    <ligand>
        <name>beta-alanine</name>
        <dbReference type="ChEBI" id="CHEBI:57966"/>
    </ligand>
</feature>
<feature type="binding site" evidence="1">
    <location>
        <begin position="147"/>
        <end position="150"/>
    </location>
    <ligand>
        <name>ATP</name>
        <dbReference type="ChEBI" id="CHEBI:30616"/>
    </ligand>
</feature>
<feature type="binding site" evidence="1">
    <location>
        <position position="153"/>
    </location>
    <ligand>
        <name>(R)-pantoate</name>
        <dbReference type="ChEBI" id="CHEBI:15980"/>
    </ligand>
</feature>
<feature type="binding site" evidence="1">
    <location>
        <position position="176"/>
    </location>
    <ligand>
        <name>ATP</name>
        <dbReference type="ChEBI" id="CHEBI:30616"/>
    </ligand>
</feature>
<feature type="binding site" evidence="1">
    <location>
        <begin position="184"/>
        <end position="187"/>
    </location>
    <ligand>
        <name>ATP</name>
        <dbReference type="ChEBI" id="CHEBI:30616"/>
    </ligand>
</feature>
<accession>B3QSB4</accession>
<name>PANC_CHLT3</name>